<protein>
    <recommendedName>
        <fullName evidence="1">DNA replication and repair protein RecF</fullName>
    </recommendedName>
</protein>
<organism>
    <name type="scientific">Streptococcus pyogenes serotype M4 (strain MGAS10750)</name>
    <dbReference type="NCBI Taxonomy" id="370554"/>
    <lineage>
        <taxon>Bacteria</taxon>
        <taxon>Bacillati</taxon>
        <taxon>Bacillota</taxon>
        <taxon>Bacilli</taxon>
        <taxon>Lactobacillales</taxon>
        <taxon>Streptococcaceae</taxon>
        <taxon>Streptococcus</taxon>
    </lineage>
</organism>
<reference key="1">
    <citation type="journal article" date="2006" name="Proc. Natl. Acad. Sci. U.S.A.">
        <title>Molecular genetic anatomy of inter- and intraserotype variation in the human bacterial pathogen group A Streptococcus.</title>
        <authorList>
            <person name="Beres S.B."/>
            <person name="Richter E.W."/>
            <person name="Nagiec M.J."/>
            <person name="Sumby P."/>
            <person name="Porcella S.F."/>
            <person name="DeLeo F.R."/>
            <person name="Musser J.M."/>
        </authorList>
    </citation>
    <scope>NUCLEOTIDE SEQUENCE [LARGE SCALE GENOMIC DNA]</scope>
    <source>
        <strain>MGAS10750</strain>
    </source>
</reference>
<name>RECF_STRPF</name>
<dbReference type="EMBL" id="CP000262">
    <property type="protein sequence ID" value="ABF38918.1"/>
    <property type="molecule type" value="Genomic_DNA"/>
</dbReference>
<dbReference type="SMR" id="Q1J443"/>
<dbReference type="KEGG" id="spi:MGAS10750_Spy1968"/>
<dbReference type="HOGENOM" id="CLU_040267_0_1_9"/>
<dbReference type="Proteomes" id="UP000002434">
    <property type="component" value="Chromosome"/>
</dbReference>
<dbReference type="GO" id="GO:0005737">
    <property type="term" value="C:cytoplasm"/>
    <property type="evidence" value="ECO:0007669"/>
    <property type="project" value="UniProtKB-SubCell"/>
</dbReference>
<dbReference type="GO" id="GO:0005524">
    <property type="term" value="F:ATP binding"/>
    <property type="evidence" value="ECO:0007669"/>
    <property type="project" value="UniProtKB-UniRule"/>
</dbReference>
<dbReference type="GO" id="GO:0003697">
    <property type="term" value="F:single-stranded DNA binding"/>
    <property type="evidence" value="ECO:0007669"/>
    <property type="project" value="UniProtKB-UniRule"/>
</dbReference>
<dbReference type="GO" id="GO:0006260">
    <property type="term" value="P:DNA replication"/>
    <property type="evidence" value="ECO:0007669"/>
    <property type="project" value="UniProtKB-UniRule"/>
</dbReference>
<dbReference type="GO" id="GO:0000731">
    <property type="term" value="P:DNA synthesis involved in DNA repair"/>
    <property type="evidence" value="ECO:0007669"/>
    <property type="project" value="TreeGrafter"/>
</dbReference>
<dbReference type="GO" id="GO:0006302">
    <property type="term" value="P:double-strand break repair"/>
    <property type="evidence" value="ECO:0007669"/>
    <property type="project" value="TreeGrafter"/>
</dbReference>
<dbReference type="GO" id="GO:0009432">
    <property type="term" value="P:SOS response"/>
    <property type="evidence" value="ECO:0007669"/>
    <property type="project" value="UniProtKB-UniRule"/>
</dbReference>
<dbReference type="CDD" id="cd03242">
    <property type="entry name" value="ABC_RecF"/>
    <property type="match status" value="1"/>
</dbReference>
<dbReference type="Gene3D" id="3.40.50.300">
    <property type="entry name" value="P-loop containing nucleotide triphosphate hydrolases"/>
    <property type="match status" value="1"/>
</dbReference>
<dbReference type="Gene3D" id="1.20.1050.90">
    <property type="entry name" value="RecF/RecN/SMC, N-terminal domain"/>
    <property type="match status" value="1"/>
</dbReference>
<dbReference type="HAMAP" id="MF_00365">
    <property type="entry name" value="RecF"/>
    <property type="match status" value="1"/>
</dbReference>
<dbReference type="InterPro" id="IPR001238">
    <property type="entry name" value="DNA-binding_RecF"/>
</dbReference>
<dbReference type="InterPro" id="IPR018078">
    <property type="entry name" value="DNA-binding_RecF_CS"/>
</dbReference>
<dbReference type="InterPro" id="IPR027417">
    <property type="entry name" value="P-loop_NTPase"/>
</dbReference>
<dbReference type="InterPro" id="IPR003395">
    <property type="entry name" value="RecF/RecN/SMC_N"/>
</dbReference>
<dbReference type="InterPro" id="IPR042174">
    <property type="entry name" value="RecF_2"/>
</dbReference>
<dbReference type="NCBIfam" id="TIGR00611">
    <property type="entry name" value="recf"/>
    <property type="match status" value="1"/>
</dbReference>
<dbReference type="PANTHER" id="PTHR32182">
    <property type="entry name" value="DNA REPLICATION AND REPAIR PROTEIN RECF"/>
    <property type="match status" value="1"/>
</dbReference>
<dbReference type="PANTHER" id="PTHR32182:SF0">
    <property type="entry name" value="DNA REPLICATION AND REPAIR PROTEIN RECF"/>
    <property type="match status" value="1"/>
</dbReference>
<dbReference type="Pfam" id="PF02463">
    <property type="entry name" value="SMC_N"/>
    <property type="match status" value="1"/>
</dbReference>
<dbReference type="SUPFAM" id="SSF52540">
    <property type="entry name" value="P-loop containing nucleoside triphosphate hydrolases"/>
    <property type="match status" value="1"/>
</dbReference>
<dbReference type="PROSITE" id="PS00617">
    <property type="entry name" value="RECF_1"/>
    <property type="match status" value="1"/>
</dbReference>
<dbReference type="PROSITE" id="PS00618">
    <property type="entry name" value="RECF_2"/>
    <property type="match status" value="1"/>
</dbReference>
<evidence type="ECO:0000255" key="1">
    <source>
        <dbReference type="HAMAP-Rule" id="MF_00365"/>
    </source>
</evidence>
<sequence>MWIKELELKHYRNYDHLLASFSSGLNVFIGNNAQGKTNFLEAIYFLSLTRSHRTRADKELIHFDHSTVSLTGKIQRISGTVDLEINLSDKGRVTKINALKQAKLSDYIGTMMVVLFAPEDLQLVKGAPSLRRKFIDIDLGQIKPVYLFELSHYNHVLKQRNSYLKSAQQIDAAFLAVLDEQLASYGARVMEHRIDFINALEKEANTHHQAISNGLESLSLSYQSSVVFDKKTSIYQQFLHQLEKNHQKDFFRKNTSVGPHRDDLAFYINGMNANFASQGQHRSLILSLKMAEVSLMKALTGDNPILLLDDVMSELDNTRQTKLLETVIKENVQTFITTTSLDHLSQLPEGIRIFHVTKGTVQVDSDIH</sequence>
<gene>
    <name evidence="1" type="primary">recF</name>
    <name type="ordered locus">MGAS10750_Spy1968</name>
</gene>
<comment type="function">
    <text evidence="1">The RecF protein is involved in DNA metabolism; it is required for DNA replication and normal SOS inducibility. RecF binds preferentially to single-stranded, linear DNA. It also seems to bind ATP.</text>
</comment>
<comment type="subcellular location">
    <subcellularLocation>
        <location evidence="1">Cytoplasm</location>
    </subcellularLocation>
</comment>
<comment type="similarity">
    <text evidence="1">Belongs to the RecF family.</text>
</comment>
<keyword id="KW-0067">ATP-binding</keyword>
<keyword id="KW-0963">Cytoplasm</keyword>
<keyword id="KW-0227">DNA damage</keyword>
<keyword id="KW-0234">DNA repair</keyword>
<keyword id="KW-0235">DNA replication</keyword>
<keyword id="KW-0238">DNA-binding</keyword>
<keyword id="KW-0547">Nucleotide-binding</keyword>
<keyword id="KW-0742">SOS response</keyword>
<proteinExistence type="inferred from homology"/>
<feature type="chain" id="PRO_1000048587" description="DNA replication and repair protein RecF">
    <location>
        <begin position="1"/>
        <end position="368"/>
    </location>
</feature>
<feature type="binding site" evidence="1">
    <location>
        <begin position="30"/>
        <end position="37"/>
    </location>
    <ligand>
        <name>ATP</name>
        <dbReference type="ChEBI" id="CHEBI:30616"/>
    </ligand>
</feature>
<accession>Q1J443</accession>